<feature type="chain" id="PRO_0000204470" description="Pimeloyl-[acyl-carrier protein] methyl ester esterase">
    <location>
        <begin position="1"/>
        <end position="250"/>
    </location>
</feature>
<feature type="active site" description="Nucleophile" evidence="1">
    <location>
        <position position="71"/>
    </location>
</feature>
<feature type="active site" evidence="1">
    <location>
        <position position="202"/>
    </location>
</feature>
<feature type="active site" evidence="1">
    <location>
        <position position="230"/>
    </location>
</feature>
<feature type="binding site" evidence="1">
    <location>
        <position position="12"/>
    </location>
    <ligand>
        <name>substrate</name>
    </ligand>
</feature>
<feature type="binding site" evidence="1">
    <location>
        <begin position="71"/>
        <end position="72"/>
    </location>
    <ligand>
        <name>substrate</name>
    </ligand>
</feature>
<feature type="binding site" evidence="1">
    <location>
        <begin position="138"/>
        <end position="142"/>
    </location>
    <ligand>
        <name>substrate</name>
    </ligand>
</feature>
<feature type="binding site" evidence="1">
    <location>
        <position position="230"/>
    </location>
    <ligand>
        <name>substrate</name>
    </ligand>
</feature>
<dbReference type="EC" id="3.1.1.85" evidence="1"/>
<dbReference type="EMBL" id="CR555306">
    <property type="protein sequence ID" value="CAI09558.1"/>
    <property type="molecule type" value="Genomic_DNA"/>
</dbReference>
<dbReference type="RefSeq" id="WP_011239218.1">
    <property type="nucleotide sequence ID" value="NC_006513.1"/>
</dbReference>
<dbReference type="SMR" id="Q5NZF6"/>
<dbReference type="STRING" id="76114.ebA6017"/>
<dbReference type="ESTHER" id="aroae-q5nzf6">
    <property type="family name" value="BioH"/>
</dbReference>
<dbReference type="KEGG" id="eba:ebA6017"/>
<dbReference type="eggNOG" id="COG2267">
    <property type="taxonomic scope" value="Bacteria"/>
</dbReference>
<dbReference type="HOGENOM" id="CLU_020336_12_2_4"/>
<dbReference type="OrthoDB" id="9798888at2"/>
<dbReference type="UniPathway" id="UPA00078"/>
<dbReference type="Proteomes" id="UP000006552">
    <property type="component" value="Chromosome"/>
</dbReference>
<dbReference type="GO" id="GO:0005737">
    <property type="term" value="C:cytoplasm"/>
    <property type="evidence" value="ECO:0007669"/>
    <property type="project" value="UniProtKB-SubCell"/>
</dbReference>
<dbReference type="GO" id="GO:0016020">
    <property type="term" value="C:membrane"/>
    <property type="evidence" value="ECO:0007669"/>
    <property type="project" value="TreeGrafter"/>
</dbReference>
<dbReference type="GO" id="GO:0090499">
    <property type="term" value="F:pimelyl-[acyl-carrier protein] methyl ester esterase activity"/>
    <property type="evidence" value="ECO:0007669"/>
    <property type="project" value="UniProtKB-EC"/>
</dbReference>
<dbReference type="GO" id="GO:0009102">
    <property type="term" value="P:biotin biosynthetic process"/>
    <property type="evidence" value="ECO:0007669"/>
    <property type="project" value="UniProtKB-UniRule"/>
</dbReference>
<dbReference type="Gene3D" id="3.40.50.1820">
    <property type="entry name" value="alpha/beta hydrolase"/>
    <property type="match status" value="1"/>
</dbReference>
<dbReference type="HAMAP" id="MF_01260">
    <property type="entry name" value="Carboxylester"/>
    <property type="match status" value="1"/>
</dbReference>
<dbReference type="InterPro" id="IPR000073">
    <property type="entry name" value="AB_hydrolase_1"/>
</dbReference>
<dbReference type="InterPro" id="IPR029058">
    <property type="entry name" value="AB_hydrolase_fold"/>
</dbReference>
<dbReference type="InterPro" id="IPR050266">
    <property type="entry name" value="AB_hydrolase_sf"/>
</dbReference>
<dbReference type="InterPro" id="IPR010076">
    <property type="entry name" value="BioH"/>
</dbReference>
<dbReference type="PANTHER" id="PTHR43798:SF31">
    <property type="entry name" value="AB HYDROLASE SUPERFAMILY PROTEIN YCLE"/>
    <property type="match status" value="1"/>
</dbReference>
<dbReference type="PANTHER" id="PTHR43798">
    <property type="entry name" value="MONOACYLGLYCEROL LIPASE"/>
    <property type="match status" value="1"/>
</dbReference>
<dbReference type="Pfam" id="PF00561">
    <property type="entry name" value="Abhydrolase_1"/>
    <property type="match status" value="1"/>
</dbReference>
<dbReference type="SUPFAM" id="SSF53474">
    <property type="entry name" value="alpha/beta-Hydrolases"/>
    <property type="match status" value="1"/>
</dbReference>
<accession>Q5NZF6</accession>
<keyword id="KW-0093">Biotin biosynthesis</keyword>
<keyword id="KW-0963">Cytoplasm</keyword>
<keyword id="KW-0378">Hydrolase</keyword>
<keyword id="KW-1185">Reference proteome</keyword>
<keyword id="KW-0719">Serine esterase</keyword>
<protein>
    <recommendedName>
        <fullName evidence="1">Pimeloyl-[acyl-carrier protein] methyl ester esterase</fullName>
        <ecNumber evidence="1">3.1.1.85</ecNumber>
    </recommendedName>
    <alternativeName>
        <fullName evidence="1">Biotin synthesis protein BioH</fullName>
    </alternativeName>
    <alternativeName>
        <fullName evidence="1">Carboxylesterase BioH</fullName>
    </alternativeName>
</protein>
<gene>
    <name evidence="1" type="primary">bioH</name>
    <name type="ordered locus">AZOSEA34330</name>
    <name type="ORF">ebA6017</name>
</gene>
<organism>
    <name type="scientific">Aromatoleum aromaticum (strain DSM 19018 / LMG 30748 / EbN1)</name>
    <name type="common">Azoarcus sp. (strain EbN1)</name>
    <dbReference type="NCBI Taxonomy" id="76114"/>
    <lineage>
        <taxon>Bacteria</taxon>
        <taxon>Pseudomonadati</taxon>
        <taxon>Pseudomonadota</taxon>
        <taxon>Betaproteobacteria</taxon>
        <taxon>Rhodocyclales</taxon>
        <taxon>Rhodocyclaceae</taxon>
        <taxon>Aromatoleum</taxon>
    </lineage>
</organism>
<proteinExistence type="inferred from homology"/>
<reference key="1">
    <citation type="journal article" date="2005" name="Arch. Microbiol.">
        <title>The genome sequence of an anaerobic aromatic-degrading denitrifying bacterium, strain EbN1.</title>
        <authorList>
            <person name="Rabus R."/>
            <person name="Kube M."/>
            <person name="Heider J."/>
            <person name="Beck A."/>
            <person name="Heitmann K."/>
            <person name="Widdel F."/>
            <person name="Reinhardt R."/>
        </authorList>
    </citation>
    <scope>NUCLEOTIDE SEQUENCE [LARGE SCALE GENOMIC DNA]</scope>
    <source>
        <strain>DSM 19018 / LMG 30748 / EbN1</strain>
    </source>
</reference>
<comment type="function">
    <text evidence="1">The physiological role of BioH is to remove the methyl group introduced by BioC when the pimeloyl moiety is complete. It allows to synthesize pimeloyl-ACP via the fatty acid synthetic pathway through the hydrolysis of the ester bonds of pimeloyl-ACP esters.</text>
</comment>
<comment type="catalytic activity">
    <reaction evidence="1">
        <text>6-carboxyhexanoyl-[ACP] methyl ester + H2O = 6-carboxyhexanoyl-[ACP] + methanol + H(+)</text>
        <dbReference type="Rhea" id="RHEA:42700"/>
        <dbReference type="Rhea" id="RHEA-COMP:9955"/>
        <dbReference type="Rhea" id="RHEA-COMP:10186"/>
        <dbReference type="ChEBI" id="CHEBI:15377"/>
        <dbReference type="ChEBI" id="CHEBI:15378"/>
        <dbReference type="ChEBI" id="CHEBI:17790"/>
        <dbReference type="ChEBI" id="CHEBI:78846"/>
        <dbReference type="ChEBI" id="CHEBI:82735"/>
        <dbReference type="EC" id="3.1.1.85"/>
    </reaction>
</comment>
<comment type="pathway">
    <text evidence="1">Cofactor biosynthesis; biotin biosynthesis.</text>
</comment>
<comment type="subunit">
    <text evidence="1">Monomer.</text>
</comment>
<comment type="subcellular location">
    <subcellularLocation>
        <location evidence="1">Cytoplasm</location>
    </subcellularLocation>
</comment>
<comment type="similarity">
    <text evidence="1">Belongs to the AB hydrolase superfamily. Carboxylesterase BioH family.</text>
</comment>
<name>BIOH_AROAE</name>
<sequence length="250" mass="26598">MNRPDLVLLHGWGLGPQVWSALTPYLPAGLRVRTPALPGHGGTPARGPTLEAWSDALLPELPDDAVVCGWSLGGLVALDLARRHPHKVARLVLIGTSPCFVTRPENAAAPWPYGLAASTVTGFIDDFAHDPAATLRRFVALQALGDARRRTVSNALNAALANLEQCRPAALGAGLELLADTDWRAALDDVRQPVQLIHGAGDALMPLAAAEWLATRLPDARLARFDDCGHAPFLSHPEDCAVLIEDVVRG</sequence>
<evidence type="ECO:0000255" key="1">
    <source>
        <dbReference type="HAMAP-Rule" id="MF_01260"/>
    </source>
</evidence>